<evidence type="ECO:0000250" key="1"/>
<evidence type="ECO:0000305" key="2"/>
<proteinExistence type="inferred from homology"/>
<name>OPP27_HAEIF</name>
<protein>
    <recommendedName>
        <fullName>Outer membrane protein P2</fullName>
        <shortName>OMP P2</shortName>
    </recommendedName>
</protein>
<dbReference type="EMBL" id="X73389">
    <property type="protein sequence ID" value="CAA51806.1"/>
    <property type="molecule type" value="Genomic_DNA"/>
</dbReference>
<dbReference type="SMR" id="Q48218"/>
<dbReference type="GO" id="GO:0009279">
    <property type="term" value="C:cell outer membrane"/>
    <property type="evidence" value="ECO:0007669"/>
    <property type="project" value="UniProtKB-SubCell"/>
</dbReference>
<dbReference type="GO" id="GO:0046930">
    <property type="term" value="C:pore complex"/>
    <property type="evidence" value="ECO:0007669"/>
    <property type="project" value="UniProtKB-KW"/>
</dbReference>
<dbReference type="GO" id="GO:0015288">
    <property type="term" value="F:porin activity"/>
    <property type="evidence" value="ECO:0007669"/>
    <property type="project" value="UniProtKB-KW"/>
</dbReference>
<dbReference type="GO" id="GO:0006811">
    <property type="term" value="P:monoatomic ion transport"/>
    <property type="evidence" value="ECO:0007669"/>
    <property type="project" value="UniProtKB-KW"/>
</dbReference>
<dbReference type="CDD" id="cd00342">
    <property type="entry name" value="gram_neg_porins"/>
    <property type="match status" value="1"/>
</dbReference>
<dbReference type="Gene3D" id="2.40.160.10">
    <property type="entry name" value="Porin"/>
    <property type="match status" value="1"/>
</dbReference>
<dbReference type="InterPro" id="IPR050298">
    <property type="entry name" value="Gram-neg_bact_OMP"/>
</dbReference>
<dbReference type="InterPro" id="IPR033900">
    <property type="entry name" value="Gram_neg_porin_domain"/>
</dbReference>
<dbReference type="InterPro" id="IPR023614">
    <property type="entry name" value="Porin_dom_sf"/>
</dbReference>
<dbReference type="PANTHER" id="PTHR34501:SF2">
    <property type="entry name" value="OUTER MEMBRANE PORIN F-RELATED"/>
    <property type="match status" value="1"/>
</dbReference>
<dbReference type="PANTHER" id="PTHR34501">
    <property type="entry name" value="PROTEIN YDDL-RELATED"/>
    <property type="match status" value="1"/>
</dbReference>
<dbReference type="Pfam" id="PF13609">
    <property type="entry name" value="Porin_4"/>
    <property type="match status" value="1"/>
</dbReference>
<dbReference type="SUPFAM" id="SSF56935">
    <property type="entry name" value="Porins"/>
    <property type="match status" value="1"/>
</dbReference>
<feature type="signal peptide">
    <location>
        <begin position="1"/>
        <end position="20"/>
    </location>
</feature>
<feature type="chain" id="PRO_0000025264" description="Outer membrane protein P2">
    <location>
        <begin position="21"/>
        <end position="369"/>
    </location>
</feature>
<reference key="1">
    <citation type="journal article" date="1993" name="Microb. Pathog.">
        <title>Genetic analysis of the diversity in outer membrane protein P2 of non-encapsulated Haemophilus influenzae.</title>
        <authorList>
            <person name="Duim B."/>
            <person name="Dankert J."/>
            <person name="Jansen H.M."/>
            <person name="van Alphen L."/>
        </authorList>
    </citation>
    <scope>NUCLEOTIDE SEQUENCE [GENOMIC DNA]</scope>
    <source>
        <strain>AG30010</strain>
    </source>
</reference>
<keyword id="KW-0998">Cell outer membrane</keyword>
<keyword id="KW-0406">Ion transport</keyword>
<keyword id="KW-0472">Membrane</keyword>
<keyword id="KW-0626">Porin</keyword>
<keyword id="KW-0732">Signal</keyword>
<keyword id="KW-0812">Transmembrane</keyword>
<keyword id="KW-1134">Transmembrane beta strand</keyword>
<keyword id="KW-0813">Transport</keyword>
<gene>
    <name type="primary">ompP2</name>
</gene>
<comment type="function">
    <text evidence="1">Forms pores that allow passive diffusion of small molecules across the outer membrane.</text>
</comment>
<comment type="subunit">
    <text evidence="1">Homotrimer.</text>
</comment>
<comment type="subcellular location">
    <subcellularLocation>
        <location>Cell outer membrane</location>
        <topology>Multi-pass membrane protein</topology>
    </subcellularLocation>
</comment>
<comment type="similarity">
    <text evidence="2">Belongs to the Gram-negative porin family.</text>
</comment>
<sequence>MKKTLAALIVGAFAASAANAAVVYNNEGTNVELGGRLSIIAEQSNSTIKDQKQQHGALRNQSSRFHIKATHNFGDGFYAQGYLETRLVSAQSGTESDNFGHIITKYAYVTLGNKALGEVKLGRAKTIADGITSAEDKEYGVLNNSKYIPIDGNTVGYTFKGIDGLVLGANYLLAQERYKYTTAAAAGAAGAAGAVAGEVYPQKISNGVQVGAKYDANNIIAGIAYGRTNYREDIASPDLGKKQQVNGALSTLGYRFSDLGLLVSLDSGYAKTKNYKDKHEKSYFVSPGFQYELMEDTNVYGNFKYERDSVDQGKKTREQAVLFGVDHKLHKQVLTYIEGAYARTRTTESKKGVKTEKEKSVGVGLRVYF</sequence>
<organism>
    <name type="scientific">Haemophilus influenzae</name>
    <dbReference type="NCBI Taxonomy" id="727"/>
    <lineage>
        <taxon>Bacteria</taxon>
        <taxon>Pseudomonadati</taxon>
        <taxon>Pseudomonadota</taxon>
        <taxon>Gammaproteobacteria</taxon>
        <taxon>Pasteurellales</taxon>
        <taxon>Pasteurellaceae</taxon>
        <taxon>Haemophilus</taxon>
    </lineage>
</organism>
<accession>Q48218</accession>